<proteinExistence type="inferred from homology"/>
<feature type="chain" id="PRO_1000132926" description="1-deoxy-D-xylulose-5-phosphate synthase">
    <location>
        <begin position="1"/>
        <end position="640"/>
    </location>
</feature>
<feature type="binding site" evidence="1">
    <location>
        <position position="77"/>
    </location>
    <ligand>
        <name>thiamine diphosphate</name>
        <dbReference type="ChEBI" id="CHEBI:58937"/>
    </ligand>
</feature>
<feature type="binding site" evidence="1">
    <location>
        <begin position="118"/>
        <end position="120"/>
    </location>
    <ligand>
        <name>thiamine diphosphate</name>
        <dbReference type="ChEBI" id="CHEBI:58937"/>
    </ligand>
</feature>
<feature type="binding site" evidence="1">
    <location>
        <position position="149"/>
    </location>
    <ligand>
        <name>Mg(2+)</name>
        <dbReference type="ChEBI" id="CHEBI:18420"/>
    </ligand>
</feature>
<feature type="binding site" evidence="1">
    <location>
        <begin position="150"/>
        <end position="151"/>
    </location>
    <ligand>
        <name>thiamine diphosphate</name>
        <dbReference type="ChEBI" id="CHEBI:58937"/>
    </ligand>
</feature>
<feature type="binding site" evidence="1">
    <location>
        <position position="178"/>
    </location>
    <ligand>
        <name>Mg(2+)</name>
        <dbReference type="ChEBI" id="CHEBI:18420"/>
    </ligand>
</feature>
<feature type="binding site" evidence="1">
    <location>
        <position position="178"/>
    </location>
    <ligand>
        <name>thiamine diphosphate</name>
        <dbReference type="ChEBI" id="CHEBI:58937"/>
    </ligand>
</feature>
<feature type="binding site" evidence="1">
    <location>
        <position position="287"/>
    </location>
    <ligand>
        <name>thiamine diphosphate</name>
        <dbReference type="ChEBI" id="CHEBI:58937"/>
    </ligand>
</feature>
<feature type="binding site" evidence="1">
    <location>
        <position position="369"/>
    </location>
    <ligand>
        <name>thiamine diphosphate</name>
        <dbReference type="ChEBI" id="CHEBI:58937"/>
    </ligand>
</feature>
<reference key="1">
    <citation type="journal article" date="2010" name="J. Bacteriol.">
        <title>The genetic basis of laboratory adaptation in Caulobacter crescentus.</title>
        <authorList>
            <person name="Marks M.E."/>
            <person name="Castro-Rojas C.M."/>
            <person name="Teiling C."/>
            <person name="Du L."/>
            <person name="Kapatral V."/>
            <person name="Walunas T.L."/>
            <person name="Crosson S."/>
        </authorList>
    </citation>
    <scope>NUCLEOTIDE SEQUENCE [LARGE SCALE GENOMIC DNA]</scope>
    <source>
        <strain>NA1000 / CB15N</strain>
    </source>
</reference>
<organism>
    <name type="scientific">Caulobacter vibrioides (strain NA1000 / CB15N)</name>
    <name type="common">Caulobacter crescentus</name>
    <dbReference type="NCBI Taxonomy" id="565050"/>
    <lineage>
        <taxon>Bacteria</taxon>
        <taxon>Pseudomonadati</taxon>
        <taxon>Pseudomonadota</taxon>
        <taxon>Alphaproteobacteria</taxon>
        <taxon>Caulobacterales</taxon>
        <taxon>Caulobacteraceae</taxon>
        <taxon>Caulobacter</taxon>
    </lineage>
</organism>
<keyword id="KW-0414">Isoprene biosynthesis</keyword>
<keyword id="KW-0460">Magnesium</keyword>
<keyword id="KW-0479">Metal-binding</keyword>
<keyword id="KW-1185">Reference proteome</keyword>
<keyword id="KW-0784">Thiamine biosynthesis</keyword>
<keyword id="KW-0786">Thiamine pyrophosphate</keyword>
<keyword id="KW-0808">Transferase</keyword>
<dbReference type="EC" id="2.2.1.7" evidence="1"/>
<dbReference type="EMBL" id="CP001340">
    <property type="protein sequence ID" value="ACL95614.1"/>
    <property type="molecule type" value="Genomic_DNA"/>
</dbReference>
<dbReference type="RefSeq" id="WP_010919929.1">
    <property type="nucleotide sequence ID" value="NC_011916.1"/>
</dbReference>
<dbReference type="RefSeq" id="YP_002517522.1">
    <property type="nucleotide sequence ID" value="NC_011916.1"/>
</dbReference>
<dbReference type="SMR" id="B8GXC4"/>
<dbReference type="GeneID" id="7333399"/>
<dbReference type="KEGG" id="ccs:CCNA_02149"/>
<dbReference type="PATRIC" id="fig|565050.3.peg.2105"/>
<dbReference type="HOGENOM" id="CLU_009227_1_4_5"/>
<dbReference type="OrthoDB" id="9803371at2"/>
<dbReference type="PhylomeDB" id="B8GXC4"/>
<dbReference type="UniPathway" id="UPA00064">
    <property type="reaction ID" value="UER00091"/>
</dbReference>
<dbReference type="Proteomes" id="UP000001364">
    <property type="component" value="Chromosome"/>
</dbReference>
<dbReference type="GO" id="GO:0008661">
    <property type="term" value="F:1-deoxy-D-xylulose-5-phosphate synthase activity"/>
    <property type="evidence" value="ECO:0007669"/>
    <property type="project" value="UniProtKB-UniRule"/>
</dbReference>
<dbReference type="GO" id="GO:0000287">
    <property type="term" value="F:magnesium ion binding"/>
    <property type="evidence" value="ECO:0007669"/>
    <property type="project" value="UniProtKB-UniRule"/>
</dbReference>
<dbReference type="GO" id="GO:0030976">
    <property type="term" value="F:thiamine pyrophosphate binding"/>
    <property type="evidence" value="ECO:0007669"/>
    <property type="project" value="UniProtKB-UniRule"/>
</dbReference>
<dbReference type="GO" id="GO:0052865">
    <property type="term" value="P:1-deoxy-D-xylulose 5-phosphate biosynthetic process"/>
    <property type="evidence" value="ECO:0007669"/>
    <property type="project" value="UniProtKB-UniPathway"/>
</dbReference>
<dbReference type="GO" id="GO:0019682">
    <property type="term" value="P:glyceraldehyde-3-phosphate metabolic process"/>
    <property type="evidence" value="ECO:0007669"/>
    <property type="project" value="UniProtKB-ARBA"/>
</dbReference>
<dbReference type="GO" id="GO:0016114">
    <property type="term" value="P:terpenoid biosynthetic process"/>
    <property type="evidence" value="ECO:0007669"/>
    <property type="project" value="UniProtKB-UniRule"/>
</dbReference>
<dbReference type="GO" id="GO:0009228">
    <property type="term" value="P:thiamine biosynthetic process"/>
    <property type="evidence" value="ECO:0007669"/>
    <property type="project" value="UniProtKB-UniRule"/>
</dbReference>
<dbReference type="CDD" id="cd02007">
    <property type="entry name" value="TPP_DXS"/>
    <property type="match status" value="1"/>
</dbReference>
<dbReference type="CDD" id="cd07033">
    <property type="entry name" value="TPP_PYR_DXS_TK_like"/>
    <property type="match status" value="1"/>
</dbReference>
<dbReference type="FunFam" id="3.40.50.920:FF:000002">
    <property type="entry name" value="1-deoxy-D-xylulose-5-phosphate synthase"/>
    <property type="match status" value="1"/>
</dbReference>
<dbReference type="FunFam" id="3.40.50.970:FF:000005">
    <property type="entry name" value="1-deoxy-D-xylulose-5-phosphate synthase"/>
    <property type="match status" value="1"/>
</dbReference>
<dbReference type="Gene3D" id="3.40.50.920">
    <property type="match status" value="1"/>
</dbReference>
<dbReference type="Gene3D" id="3.40.50.970">
    <property type="match status" value="2"/>
</dbReference>
<dbReference type="HAMAP" id="MF_00315">
    <property type="entry name" value="DXP_synth"/>
    <property type="match status" value="1"/>
</dbReference>
<dbReference type="InterPro" id="IPR005477">
    <property type="entry name" value="Dxylulose-5-P_synthase"/>
</dbReference>
<dbReference type="InterPro" id="IPR029061">
    <property type="entry name" value="THDP-binding"/>
</dbReference>
<dbReference type="InterPro" id="IPR009014">
    <property type="entry name" value="Transketo_C/PFOR_II"/>
</dbReference>
<dbReference type="InterPro" id="IPR005475">
    <property type="entry name" value="Transketolase-like_Pyr-bd"/>
</dbReference>
<dbReference type="InterPro" id="IPR020826">
    <property type="entry name" value="Transketolase_BS"/>
</dbReference>
<dbReference type="InterPro" id="IPR033248">
    <property type="entry name" value="Transketolase_C"/>
</dbReference>
<dbReference type="InterPro" id="IPR049557">
    <property type="entry name" value="Transketolase_CS"/>
</dbReference>
<dbReference type="NCBIfam" id="TIGR00204">
    <property type="entry name" value="dxs"/>
    <property type="match status" value="1"/>
</dbReference>
<dbReference type="NCBIfam" id="NF003933">
    <property type="entry name" value="PRK05444.2-2"/>
    <property type="match status" value="1"/>
</dbReference>
<dbReference type="PANTHER" id="PTHR43322">
    <property type="entry name" value="1-D-DEOXYXYLULOSE 5-PHOSPHATE SYNTHASE-RELATED"/>
    <property type="match status" value="1"/>
</dbReference>
<dbReference type="PANTHER" id="PTHR43322:SF5">
    <property type="entry name" value="1-DEOXY-D-XYLULOSE-5-PHOSPHATE SYNTHASE, CHLOROPLASTIC"/>
    <property type="match status" value="1"/>
</dbReference>
<dbReference type="Pfam" id="PF13292">
    <property type="entry name" value="DXP_synthase_N"/>
    <property type="match status" value="1"/>
</dbReference>
<dbReference type="Pfam" id="PF02779">
    <property type="entry name" value="Transket_pyr"/>
    <property type="match status" value="1"/>
</dbReference>
<dbReference type="Pfam" id="PF02780">
    <property type="entry name" value="Transketolase_C"/>
    <property type="match status" value="1"/>
</dbReference>
<dbReference type="SMART" id="SM00861">
    <property type="entry name" value="Transket_pyr"/>
    <property type="match status" value="1"/>
</dbReference>
<dbReference type="SUPFAM" id="SSF52518">
    <property type="entry name" value="Thiamin diphosphate-binding fold (THDP-binding)"/>
    <property type="match status" value="2"/>
</dbReference>
<dbReference type="SUPFAM" id="SSF52922">
    <property type="entry name" value="TK C-terminal domain-like"/>
    <property type="match status" value="1"/>
</dbReference>
<dbReference type="PROSITE" id="PS00801">
    <property type="entry name" value="TRANSKETOLASE_1"/>
    <property type="match status" value="1"/>
</dbReference>
<dbReference type="PROSITE" id="PS00802">
    <property type="entry name" value="TRANSKETOLASE_2"/>
    <property type="match status" value="1"/>
</dbReference>
<name>DXS_CAUVN</name>
<evidence type="ECO:0000255" key="1">
    <source>
        <dbReference type="HAMAP-Rule" id="MF_00315"/>
    </source>
</evidence>
<sequence length="640" mass="67172">MSSKTPLLDTIASPADTRGLSLAELKQLAAEVRAETIDAVSVTGGHLGAGLGVVELTVALHHVFETPKDIVIWDVGHQAYPHKILTGRRDRIRTLRQGGGLSGFTKRAESEYDPFGAAHAATSISAALGFCAARDAKGEDNSVIAVIGDGSLGAGMAYEAMNAATDTTKRLIVILNDNDMSIAPPVGGMSAYLANLVSGGAYRSVRKLGKTVVEKLPTPMREAARKAEEYARGMVTGGTFFEELGFYYIGPIDGHDMDALVSVLKNAKAFGDKPVLVHCVTQKGKGYAPAEGAADKLHAVVKFDVVTGQQQKAAGGPPSYTKVFAQELIKQAEKDDKIVAITAAMPSGTGLDLFGKAFPERTFDVGIAEQHAVTFAAGMAADGMKPFAAIYSTFLQRGYDQVVHDVAIQGLPVRFAMDRAGLVGADGPTHAGSFDIGFMGALPGMVLMAAADEVELARMVATAAEIDDRPSAFRYPRGEGLGLDMPAIAEPLEIGKGRIVREGTSVAIVSFGTRLSESLKAADLLAARGLSATVCDARFAKPLDLDLLLRLAREHEAIITVEEGSMGGFGAFVLQALAQHGALDRGLKIRTLCLPDVFQDQDKPDAMYAQAGLDAEGILRGALSAMGMDNVSAAGAGRRA</sequence>
<gene>
    <name evidence="1" type="primary">dxs</name>
    <name type="ordered locus">CCNA_02149</name>
</gene>
<accession>B8GXC4</accession>
<protein>
    <recommendedName>
        <fullName evidence="1">1-deoxy-D-xylulose-5-phosphate synthase</fullName>
        <ecNumber evidence="1">2.2.1.7</ecNumber>
    </recommendedName>
    <alternativeName>
        <fullName evidence="1">1-deoxyxylulose-5-phosphate synthase</fullName>
        <shortName evidence="1">DXP synthase</shortName>
        <shortName evidence="1">DXPS</shortName>
    </alternativeName>
</protein>
<comment type="function">
    <text evidence="1">Catalyzes the acyloin condensation reaction between C atoms 2 and 3 of pyruvate and glyceraldehyde 3-phosphate to yield 1-deoxy-D-xylulose-5-phosphate (DXP).</text>
</comment>
<comment type="catalytic activity">
    <reaction evidence="1">
        <text>D-glyceraldehyde 3-phosphate + pyruvate + H(+) = 1-deoxy-D-xylulose 5-phosphate + CO2</text>
        <dbReference type="Rhea" id="RHEA:12605"/>
        <dbReference type="ChEBI" id="CHEBI:15361"/>
        <dbReference type="ChEBI" id="CHEBI:15378"/>
        <dbReference type="ChEBI" id="CHEBI:16526"/>
        <dbReference type="ChEBI" id="CHEBI:57792"/>
        <dbReference type="ChEBI" id="CHEBI:59776"/>
        <dbReference type="EC" id="2.2.1.7"/>
    </reaction>
</comment>
<comment type="cofactor">
    <cofactor evidence="1">
        <name>Mg(2+)</name>
        <dbReference type="ChEBI" id="CHEBI:18420"/>
    </cofactor>
    <text evidence="1">Binds 1 Mg(2+) ion per subunit.</text>
</comment>
<comment type="cofactor">
    <cofactor evidence="1">
        <name>thiamine diphosphate</name>
        <dbReference type="ChEBI" id="CHEBI:58937"/>
    </cofactor>
    <text evidence="1">Binds 1 thiamine pyrophosphate per subunit.</text>
</comment>
<comment type="pathway">
    <text evidence="1">Metabolic intermediate biosynthesis; 1-deoxy-D-xylulose 5-phosphate biosynthesis; 1-deoxy-D-xylulose 5-phosphate from D-glyceraldehyde 3-phosphate and pyruvate: step 1/1.</text>
</comment>
<comment type="subunit">
    <text evidence="1">Homodimer.</text>
</comment>
<comment type="similarity">
    <text evidence="1">Belongs to the transketolase family. DXPS subfamily.</text>
</comment>